<comment type="function">
    <text evidence="2">Multifunctional protein which displays endonuclease and helicase activities required for initiating and directing viral DNA replication. Also plays a role in viral packaging and transactivation of several promoters. Binds site-specifically to 2-3 approximate tandem copies within the origins of replication (Ori), unwinds this hairpin region and nicks one DNA strand thereby initiating the rolling circle replication (RCR). Cooperatively binds Ori with host PIF and probably other host factors, which activate the nickase function of NS1. Becomes covalently attached to the 5' end of the nick and provides a 3'OH for priming DNA synthesis. The helicase activity unwinds DNA in a 3'-5' direction on the longer strand. Inhibits the host cell cycle during the G1/S transition, the S-phase, and the G2/M transition. These arrests may provide essential cellular factors for viral DNA replication. Promotes apoptosis in host cell.</text>
</comment>
<comment type="catalytic activity">
    <reaction evidence="2">
        <text>ATP + H2O = ADP + phosphate + H(+)</text>
        <dbReference type="Rhea" id="RHEA:13065"/>
        <dbReference type="ChEBI" id="CHEBI:15377"/>
        <dbReference type="ChEBI" id="CHEBI:15378"/>
        <dbReference type="ChEBI" id="CHEBI:30616"/>
        <dbReference type="ChEBI" id="CHEBI:43474"/>
        <dbReference type="ChEBI" id="CHEBI:456216"/>
        <dbReference type="EC" id="3.6.4.12"/>
    </reaction>
</comment>
<comment type="cofactor">
    <cofactor evidence="2">
        <name>Mg(2+)</name>
        <dbReference type="ChEBI" id="CHEBI:18420"/>
    </cofactor>
    <text evidence="2">The endonuclease active site can probably bind other divalent cations.</text>
</comment>
<comment type="subunit">
    <text evidence="3">Homooligomer; when bound to DNA.</text>
</comment>
<comment type="subcellular location">
    <subcellularLocation>
        <location evidence="1">Host nucleus</location>
    </subcellularLocation>
</comment>
<comment type="domain">
    <text evidence="2 3">In the N-terminus, the endonuclease region is involved in binding to the origin of replication. In the middle, there are the ATPase and helicase activities (By similarity). The C-terminus probably contains a transactivation domain (By similarity).</text>
</comment>
<comment type="PTM">
    <text evidence="2">Phosphorylated.</text>
</comment>
<comment type="similarity">
    <text evidence="7">Belongs to the parvoviruses initiator protein NS1 family.</text>
</comment>
<gene>
    <name type="primary">NS1</name>
</gene>
<feature type="chain" id="PRO_0000222469" description="Initiator protein NS1">
    <location>
        <begin position="1"/>
        <end position="668"/>
    </location>
</feature>
<feature type="domain" description="PV NS1-Nuc" evidence="5">
    <location>
        <begin position="21"/>
        <end position="259"/>
    </location>
</feature>
<feature type="domain" description="SF3 helicase" evidence="4">
    <location>
        <begin position="373"/>
        <end position="528"/>
    </location>
</feature>
<feature type="region of interest" description="DNA-binding" evidence="2">
    <location>
        <begin position="1"/>
        <end position="276"/>
    </location>
</feature>
<feature type="region of interest" description="Ori-binding" evidence="2">
    <location>
        <begin position="191"/>
        <end position="195"/>
    </location>
</feature>
<feature type="region of interest" description="Transactivation" evidence="2">
    <location>
        <begin position="543"/>
        <end position="668"/>
    </location>
</feature>
<feature type="region of interest" description="Disordered" evidence="6">
    <location>
        <begin position="571"/>
        <end position="592"/>
    </location>
</feature>
<feature type="region of interest" description="Disordered" evidence="6">
    <location>
        <begin position="605"/>
        <end position="643"/>
    </location>
</feature>
<feature type="short sequence motif" description="RCR-2" evidence="5">
    <location>
        <begin position="127"/>
        <end position="129"/>
    </location>
</feature>
<feature type="short sequence motif" description="RCR-3" evidence="5">
    <location>
        <begin position="210"/>
        <end position="214"/>
    </location>
</feature>
<feature type="compositionally biased region" description="Polar residues" evidence="6">
    <location>
        <begin position="609"/>
        <end position="641"/>
    </location>
</feature>
<feature type="active site" description="For nuclease activity" evidence="5">
    <location>
        <position position="210"/>
    </location>
</feature>
<feature type="binding site" evidence="5">
    <location>
        <position position="119"/>
    </location>
    <ligand>
        <name>a divalent metal cation</name>
        <dbReference type="ChEBI" id="CHEBI:60240"/>
    </ligand>
</feature>
<feature type="binding site" evidence="5">
    <location>
        <position position="127"/>
    </location>
    <ligand>
        <name>a divalent metal cation</name>
        <dbReference type="ChEBI" id="CHEBI:60240"/>
    </ligand>
</feature>
<feature type="binding site" evidence="5">
    <location>
        <position position="129"/>
    </location>
    <ligand>
        <name>a divalent metal cation</name>
        <dbReference type="ChEBI" id="CHEBI:60240"/>
    </ligand>
</feature>
<feature type="binding site" evidence="4">
    <location>
        <begin position="399"/>
        <end position="406"/>
    </location>
    <ligand>
        <name>ATP</name>
        <dbReference type="ChEBI" id="CHEBI:30616"/>
    </ligand>
</feature>
<sequence>MAGNAYSDEVLGTTNWLKDKSNQEVFSFVFKNEDVQLNGKNIGWNSYRKELQEEELKSLQRGAETTWDQSEDMEWESSVDELTKKQVFIFDSLVKKCLFEVLSTKNIAPSDVTWFVQHEWGKDQGWHCHVLIGGKNFSQAQGKWWRRQLNVYWSRWLVTACSVQLSPAERIKLREIAEDQEWVTLLTYKHKQTKKDYTKCVCFGNMVAYYFLTKKKICTSPPRDGGYFLSSDSGWKTNFLKEGERHLVSKLYTDDMRPETVETTVTTAQETKRGRIQTKKEVSIKTTLKELVHKRVTSPEDWMMMQPDSYIEMMAQPGGENLLKNTLEICTLTLARTKTAFDLILEKAETSKLTNFLLADTRTCRIFAFHGWNYIKVCHAICCVLNRQGGKRNTVLFHGPASTGKSIIAQAIAQAVGNVGCYNAANVNFPFNDCTNKNLIWVEEAGNFGQQVNQFKAICSGQTIRIDQKGKGSKQIEPTPVIMTTNENITVVKIGCEERPEHTQPIRDRMLNIHLTHTLPGDFGLVDKNEWPMICAWLVKNGYQSTMASYCAKWGKVPDWTENWAEPKVTTEINSVGSTNSPSPKSTPLSQNYALTPSDLEDLALEPWSTPSTPVVGTVKTPNTGETGSTACQEAQRSPTWSEIEEDLRACFSSEHWKSDSEQLPNLD</sequence>
<name>NS1_PAVL3</name>
<proteinExistence type="inferred from homology"/>
<protein>
    <recommendedName>
        <fullName evidence="2">Initiator protein NS1</fullName>
        <shortName>NS1</shortName>
        <ecNumber evidence="3">3.1.21.-</ecNumber>
        <ecNumber evidence="3">3.6.4.12</ecNumber>
    </recommendedName>
    <alternativeName>
        <fullName>NCVP1</fullName>
    </alternativeName>
    <alternativeName>
        <fullName>Non-capsid protein NS-1</fullName>
    </alternativeName>
    <alternativeName>
        <fullName>Non-structural protein 1</fullName>
    </alternativeName>
    <alternativeName>
        <fullName>Non-structural protein NS1</fullName>
    </alternativeName>
</protein>
<reference key="1">
    <citation type="journal article" date="1993" name="Virology">
        <title>The complete nucleotide sequence of parvovirus LuIII and localization of a unique sequence possibly responsible for its encapsidation pattern.</title>
        <authorList>
            <person name="Diffoot N."/>
            <person name="Chen K.C."/>
            <person name="Bates R.C."/>
            <person name="Lederma M."/>
        </authorList>
    </citation>
    <scope>NUCLEOTIDE SEQUENCE [GENOMIC DNA]</scope>
</reference>
<keyword id="KW-0067">ATP-binding</keyword>
<keyword id="KW-0190">Covalent protein-DNA linkage</keyword>
<keyword id="KW-0235">DNA replication</keyword>
<keyword id="KW-0238">DNA-binding</keyword>
<keyword id="KW-0255">Endonuclease</keyword>
<keyword id="KW-1078">G1/S host cell cycle checkpoint dysregulation by virus</keyword>
<keyword id="KW-0347">Helicase</keyword>
<keyword id="KW-1079">Host G2/M cell cycle arrest by virus</keyword>
<keyword id="KW-1048">Host nucleus</keyword>
<keyword id="KW-0945">Host-virus interaction</keyword>
<keyword id="KW-0378">Hydrolase</keyword>
<keyword id="KW-0460">Magnesium</keyword>
<keyword id="KW-0479">Metal-binding</keyword>
<keyword id="KW-1119">Modulation of host cell apoptosis by virus</keyword>
<keyword id="KW-1121">Modulation of host cell cycle by virus</keyword>
<keyword id="KW-0540">Nuclease</keyword>
<keyword id="KW-0547">Nucleotide-binding</keyword>
<keyword id="KW-0804">Transcription</keyword>
<keyword id="KW-0805">Transcription regulation</keyword>
<keyword id="KW-1194">Viral DNA replication</keyword>
<keyword id="KW-0231">Viral genome packaging</keyword>
<keyword id="KW-1188">Viral release from host cell</keyword>
<organism>
    <name type="scientific">Parvovirus LuIII</name>
    <dbReference type="NCBI Taxonomy" id="35339"/>
    <lineage>
        <taxon>Viruses</taxon>
        <taxon>Monodnaviria</taxon>
        <taxon>Shotokuvirae</taxon>
        <taxon>Cossaviricota</taxon>
        <taxon>Quintoviricetes</taxon>
        <taxon>Piccovirales</taxon>
        <taxon>Parvoviridae</taxon>
        <taxon>Parvovirinae</taxon>
        <taxon>Protoparvovirus</taxon>
        <taxon>Protoparvovirus rodent1</taxon>
    </lineage>
</organism>
<evidence type="ECO:0000250" key="1">
    <source>
        <dbReference type="UniProtKB" id="D0EZM8"/>
    </source>
</evidence>
<evidence type="ECO:0000250" key="2">
    <source>
        <dbReference type="UniProtKB" id="P03134"/>
    </source>
</evidence>
<evidence type="ECO:0000250" key="3">
    <source>
        <dbReference type="UniProtKB" id="Q9PZT1"/>
    </source>
</evidence>
<evidence type="ECO:0000255" key="4">
    <source>
        <dbReference type="PROSITE-ProRule" id="PRU00551"/>
    </source>
</evidence>
<evidence type="ECO:0000255" key="5">
    <source>
        <dbReference type="PROSITE-ProRule" id="PRU01366"/>
    </source>
</evidence>
<evidence type="ECO:0000256" key="6">
    <source>
        <dbReference type="SAM" id="MobiDB-lite"/>
    </source>
</evidence>
<evidence type="ECO:0000305" key="7"/>
<accession>P36311</accession>
<dbReference type="EC" id="3.1.21.-" evidence="3"/>
<dbReference type="EC" id="3.6.4.12" evidence="3"/>
<dbReference type="EMBL" id="M81888">
    <property type="status" value="NOT_ANNOTATED_CDS"/>
    <property type="molecule type" value="Genomic_DNA"/>
</dbReference>
<dbReference type="PIR" id="A44276">
    <property type="entry name" value="A44276"/>
</dbReference>
<dbReference type="SMR" id="P36311"/>
<dbReference type="Proteomes" id="UP000007898">
    <property type="component" value="Genome"/>
</dbReference>
<dbReference type="GO" id="GO:0042025">
    <property type="term" value="C:host cell nucleus"/>
    <property type="evidence" value="ECO:0007669"/>
    <property type="project" value="UniProtKB-SubCell"/>
</dbReference>
<dbReference type="GO" id="GO:0005524">
    <property type="term" value="F:ATP binding"/>
    <property type="evidence" value="ECO:0007669"/>
    <property type="project" value="UniProtKB-KW"/>
</dbReference>
<dbReference type="GO" id="GO:0016887">
    <property type="term" value="F:ATP hydrolysis activity"/>
    <property type="evidence" value="ECO:0007669"/>
    <property type="project" value="RHEA"/>
</dbReference>
<dbReference type="GO" id="GO:0003677">
    <property type="term" value="F:DNA binding"/>
    <property type="evidence" value="ECO:0007669"/>
    <property type="project" value="UniProtKB-KW"/>
</dbReference>
<dbReference type="GO" id="GO:0004519">
    <property type="term" value="F:endonuclease activity"/>
    <property type="evidence" value="ECO:0007669"/>
    <property type="project" value="UniProtKB-KW"/>
</dbReference>
<dbReference type="GO" id="GO:0004386">
    <property type="term" value="F:helicase activity"/>
    <property type="evidence" value="ECO:0007669"/>
    <property type="project" value="UniProtKB-KW"/>
</dbReference>
<dbReference type="GO" id="GO:0046872">
    <property type="term" value="F:metal ion binding"/>
    <property type="evidence" value="ECO:0007669"/>
    <property type="project" value="UniProtKB-KW"/>
</dbReference>
<dbReference type="GO" id="GO:0006260">
    <property type="term" value="P:DNA replication"/>
    <property type="evidence" value="ECO:0007669"/>
    <property type="project" value="UniProtKB-KW"/>
</dbReference>
<dbReference type="GO" id="GO:0039592">
    <property type="term" value="P:symbiont-mediated arrest of host cell cycle during G2/M transition"/>
    <property type="evidence" value="ECO:0007669"/>
    <property type="project" value="UniProtKB-KW"/>
</dbReference>
<dbReference type="GO" id="GO:0052150">
    <property type="term" value="P:symbiont-mediated perturbation of host apoptosis"/>
    <property type="evidence" value="ECO:0007669"/>
    <property type="project" value="UniProtKB-KW"/>
</dbReference>
<dbReference type="GO" id="GO:0039645">
    <property type="term" value="P:symbiont-mediated perturbation of host cell cycle G1/S transition checkpoint"/>
    <property type="evidence" value="ECO:0007669"/>
    <property type="project" value="UniProtKB-KW"/>
</dbReference>
<dbReference type="GO" id="GO:0039693">
    <property type="term" value="P:viral DNA genome replication"/>
    <property type="evidence" value="ECO:0007669"/>
    <property type="project" value="UniProtKB-KW"/>
</dbReference>
<dbReference type="FunFam" id="3.40.50.300:FF:003160">
    <property type="entry name" value="Initiator protein NS1"/>
    <property type="match status" value="1"/>
</dbReference>
<dbReference type="Gene3D" id="3.40.1310.20">
    <property type="match status" value="1"/>
</dbReference>
<dbReference type="Gene3D" id="3.40.50.300">
    <property type="entry name" value="P-loop containing nucleotide triphosphate hydrolases"/>
    <property type="match status" value="1"/>
</dbReference>
<dbReference type="InterPro" id="IPR014015">
    <property type="entry name" value="Helicase_SF3_DNA-vir"/>
</dbReference>
<dbReference type="InterPro" id="IPR027417">
    <property type="entry name" value="P-loop_NTPase"/>
</dbReference>
<dbReference type="InterPro" id="IPR021972">
    <property type="entry name" value="Parvovirus_NS1_C"/>
</dbReference>
<dbReference type="InterPro" id="IPR001257">
    <property type="entry name" value="Parvovirus_NS1_helicase"/>
</dbReference>
<dbReference type="InterPro" id="IPR021076">
    <property type="entry name" value="Parvovirus_NS1_N"/>
</dbReference>
<dbReference type="InterPro" id="IPR049901">
    <property type="entry name" value="PV_NS1-NUC"/>
</dbReference>
<dbReference type="Pfam" id="PF12117">
    <property type="entry name" value="NS1_C"/>
    <property type="match status" value="1"/>
</dbReference>
<dbReference type="Pfam" id="PF01057">
    <property type="entry name" value="Parvo_NS1"/>
    <property type="match status" value="1"/>
</dbReference>
<dbReference type="Pfam" id="PF12433">
    <property type="entry name" value="PV_NSP1"/>
    <property type="match status" value="1"/>
</dbReference>
<dbReference type="SUPFAM" id="SSF55464">
    <property type="entry name" value="Origin of replication-binding domain, RBD-like"/>
    <property type="match status" value="1"/>
</dbReference>
<dbReference type="SUPFAM" id="SSF52540">
    <property type="entry name" value="P-loop containing nucleoside triphosphate hydrolases"/>
    <property type="match status" value="1"/>
</dbReference>
<dbReference type="PROSITE" id="PS52022">
    <property type="entry name" value="PV_NS1_NUC"/>
    <property type="match status" value="1"/>
</dbReference>
<dbReference type="PROSITE" id="PS51206">
    <property type="entry name" value="SF3_HELICASE_1"/>
    <property type="match status" value="1"/>
</dbReference>
<organismHost>
    <name type="scientific">Rodentia</name>
    <dbReference type="NCBI Taxonomy" id="9989"/>
</organismHost>